<dbReference type="EC" id="2.7.7.-" evidence="4"/>
<dbReference type="EMBL" id="LR761642">
    <property type="status" value="NOT_ANNOTATED_CDS"/>
    <property type="molecule type" value="Genomic_DNA"/>
</dbReference>
<dbReference type="SMR" id="P0DXB9"/>
<dbReference type="EnsemblMetazoa" id="G32657.2">
    <property type="protein sequence ID" value="G32657.2:cds"/>
    <property type="gene ID" value="G32657"/>
</dbReference>
<dbReference type="EnsemblMetazoa" id="G32657.3">
    <property type="protein sequence ID" value="G32657.3:cds"/>
    <property type="gene ID" value="G32657"/>
</dbReference>
<dbReference type="OMA" id="VWNNILH"/>
<dbReference type="Proteomes" id="UP000005408">
    <property type="component" value="Unassembled WGS sequence"/>
</dbReference>
<dbReference type="GO" id="GO:0005524">
    <property type="term" value="F:ATP binding"/>
    <property type="evidence" value="ECO:0007669"/>
    <property type="project" value="UniProtKB-KW"/>
</dbReference>
<dbReference type="GO" id="GO:0003690">
    <property type="term" value="F:double-stranded DNA binding"/>
    <property type="evidence" value="ECO:0000314"/>
    <property type="project" value="UniProtKB"/>
</dbReference>
<dbReference type="GO" id="GO:0046872">
    <property type="term" value="F:metal ion binding"/>
    <property type="evidence" value="ECO:0007669"/>
    <property type="project" value="UniProtKB-KW"/>
</dbReference>
<dbReference type="GO" id="GO:0016779">
    <property type="term" value="F:nucleotidyltransferase activity"/>
    <property type="evidence" value="ECO:0007669"/>
    <property type="project" value="UniProtKB-KW"/>
</dbReference>
<dbReference type="GO" id="GO:0045087">
    <property type="term" value="P:innate immune response"/>
    <property type="evidence" value="ECO:0007669"/>
    <property type="project" value="UniProtKB-KW"/>
</dbReference>
<dbReference type="Gene3D" id="1.10.1410.40">
    <property type="match status" value="1"/>
</dbReference>
<dbReference type="Gene3D" id="3.30.460.90">
    <property type="match status" value="1"/>
</dbReference>
<dbReference type="Gene3D" id="3.30.160.60">
    <property type="entry name" value="Classic Zinc Finger"/>
    <property type="match status" value="1"/>
</dbReference>
<dbReference type="InterPro" id="IPR046903">
    <property type="entry name" value="Mab-21-like_nuc_Trfase"/>
</dbReference>
<dbReference type="InterPro" id="IPR046906">
    <property type="entry name" value="Mab-21_HhH/H2TH-like"/>
</dbReference>
<dbReference type="InterPro" id="IPR024810">
    <property type="entry name" value="MAB21L/cGLR"/>
</dbReference>
<dbReference type="InterPro" id="IPR013087">
    <property type="entry name" value="Znf_C2H2_type"/>
</dbReference>
<dbReference type="PANTHER" id="PTHR10656">
    <property type="entry name" value="CELL FATE DETERMINING PROTEIN MAB21-RELATED"/>
    <property type="match status" value="1"/>
</dbReference>
<dbReference type="PANTHER" id="PTHR10656:SF42">
    <property type="entry name" value="CYCLIC GMP-AMP SYNTHASE-LIKE PROTEIN-RELATED"/>
    <property type="match status" value="1"/>
</dbReference>
<dbReference type="Pfam" id="PF03281">
    <property type="entry name" value="Mab-21"/>
    <property type="match status" value="1"/>
</dbReference>
<dbReference type="Pfam" id="PF20266">
    <property type="entry name" value="Mab-21_C"/>
    <property type="match status" value="1"/>
</dbReference>
<dbReference type="SMART" id="SM01265">
    <property type="entry name" value="Mab-21"/>
    <property type="match status" value="1"/>
</dbReference>
<dbReference type="SMART" id="SM00355">
    <property type="entry name" value="ZnF_C2H2"/>
    <property type="match status" value="2"/>
</dbReference>
<name>CGLR_MAGGI</name>
<organism>
    <name type="scientific">Magallana gigas</name>
    <name type="common">Pacific oyster</name>
    <name type="synonym">Crassostrea gigas</name>
    <dbReference type="NCBI Taxonomy" id="29159"/>
    <lineage>
        <taxon>Eukaryota</taxon>
        <taxon>Metazoa</taxon>
        <taxon>Spiralia</taxon>
        <taxon>Lophotrochozoa</taxon>
        <taxon>Mollusca</taxon>
        <taxon>Bivalvia</taxon>
        <taxon>Autobranchia</taxon>
        <taxon>Pteriomorphia</taxon>
        <taxon>Ostreida</taxon>
        <taxon>Ostreoidea</taxon>
        <taxon>Ostreidae</taxon>
        <taxon>Magallana</taxon>
    </lineage>
</organism>
<proteinExistence type="evidence at protein level"/>
<sequence>MVIKCPNCDKNDFKSVRGLNCHISRIHPSSADGRGLRPSTDTRGRRDDKDIVVKDITCPFCDKNDFKSERGLSCHITRMHRSSSDGKGPRPSTGTRDRKDDRDGARPETLTPRHEDHERHNSDRDVVKGIAKVQRDSLQKGSPDNILLKDGARPETLTPRHEDHERHNSDRDVVKGVAKVQRESLQRGSPGNILLKNDAVGAKPESRPAKYKESPKQSRTTEEPHDRPLSSLSNFILSFNAPNFEKFVKMIEGSIVRPREDSTLRTESVNKFIDDLKVVMERISDIPLKLLKSGSYYDKTKIDYNNEFDFMFYADIKMEADFTNCPPGYCKIRKGVTVNKDLDPFIDRNGYLVPKLYKSHMFDIFEKCRTDPSFRKGRRTQLQDRKPESPAYTLLFDLGIPDKSPIDIDLVPAIRISGWPKTKDAREIQTGKWIDISTAKKAMECFHVVTKQFPEAHPDTNLLWRVSFSHAEKELILHADLSDKGCRKNVFKILKKIKENMKSKNPTEMDKFCSYHLKMFILGFYDTHSDFSKDQKLDMLKKGIEQLAKCVREGAIENYFIPKDNVLQSVPEEERRYVVRELEGLLQ</sequence>
<feature type="chain" id="PRO_0000460014" description="Cyclic GMP-AMP synthase-like receptor">
    <location>
        <begin position="1"/>
        <end position="587"/>
    </location>
</feature>
<feature type="region of interest" description="Disordered" evidence="3">
    <location>
        <begin position="26"/>
        <end position="48"/>
    </location>
</feature>
<feature type="region of interest" description="Disordered" evidence="3">
    <location>
        <begin position="77"/>
        <end position="229"/>
    </location>
</feature>
<feature type="compositionally biased region" description="Basic and acidic residues" evidence="3">
    <location>
        <begin position="95"/>
        <end position="138"/>
    </location>
</feature>
<feature type="compositionally biased region" description="Basic and acidic residues" evidence="3">
    <location>
        <begin position="150"/>
        <end position="185"/>
    </location>
</feature>
<feature type="compositionally biased region" description="Basic and acidic residues" evidence="3">
    <location>
        <begin position="204"/>
        <end position="228"/>
    </location>
</feature>
<feature type="binding site" evidence="2">
    <location>
        <position position="307"/>
    </location>
    <ligand>
        <name>Mg(2+)</name>
        <dbReference type="ChEBI" id="CHEBI:18420"/>
        <note>catalytic</note>
    </ligand>
</feature>
<feature type="binding site" evidence="2">
    <location>
        <position position="309"/>
    </location>
    <ligand>
        <name>Mg(2+)</name>
        <dbReference type="ChEBI" id="CHEBI:18420"/>
        <note>catalytic</note>
    </ligand>
</feature>
<feature type="binding site" evidence="2">
    <location>
        <position position="409"/>
    </location>
    <ligand>
        <name>Mg(2+)</name>
        <dbReference type="ChEBI" id="CHEBI:18420"/>
        <note>catalytic</note>
    </ligand>
</feature>
<protein>
    <recommendedName>
        <fullName evidence="6">Cyclic GMP-AMP synthase-like receptor</fullName>
        <shortName evidence="5">Cg-cGLR</shortName>
    </recommendedName>
    <alternativeName>
        <fullName evidence="6">Cyclic UMP-AMP synthase cGLR</fullName>
        <ecNumber evidence="4">2.7.7.-</ecNumber>
    </alternativeName>
</protein>
<gene>
    <name evidence="5" type="primary">cGLR</name>
</gene>
<evidence type="ECO:0000250" key="1">
    <source>
        <dbReference type="UniProtKB" id="D6WI29"/>
    </source>
</evidence>
<evidence type="ECO:0000250" key="2">
    <source>
        <dbReference type="UniProtKB" id="Q8N884"/>
    </source>
</evidence>
<evidence type="ECO:0000256" key="3">
    <source>
        <dbReference type="SAM" id="MobiDB-lite"/>
    </source>
</evidence>
<evidence type="ECO:0000269" key="4">
    <source>
    </source>
</evidence>
<evidence type="ECO:0000303" key="5">
    <source>
    </source>
</evidence>
<evidence type="ECO:0000305" key="6"/>
<accession>P0DXB9</accession>
<keyword id="KW-0067">ATP-binding</keyword>
<keyword id="KW-0238">DNA-binding</keyword>
<keyword id="KW-0391">Immunity</keyword>
<keyword id="KW-0399">Innate immunity</keyword>
<keyword id="KW-0460">Magnesium</keyword>
<keyword id="KW-0464">Manganese</keyword>
<keyword id="KW-0479">Metal-binding</keyword>
<keyword id="KW-0547">Nucleotide-binding</keyword>
<keyword id="KW-0548">Nucleotidyltransferase</keyword>
<keyword id="KW-1185">Reference proteome</keyword>
<keyword id="KW-0808">Transferase</keyword>
<reference key="1">
    <citation type="submission" date="2020-02" db="EMBL/GenBank/DDBJ databases">
        <authorList>
            <person name="Gutierrez A."/>
            <person name="Penaloza C."/>
        </authorList>
    </citation>
    <scope>NUCLEOTIDE SEQUENCE [LARGE SCALE GENOMIC DNA]</scope>
</reference>
<reference key="2">
    <citation type="journal article" date="2023" name="Cell">
        <title>cGLRs are a diverse family of pattern recognition receptors in innate immunity.</title>
        <authorList>
            <person name="Li Y."/>
            <person name="Slavik K.M."/>
            <person name="Toyoda H.C."/>
            <person name="Morehouse B.R."/>
            <person name="de Oliveira Mann C.C."/>
            <person name="Elek A."/>
            <person name="Levy S."/>
            <person name="Wang Z."/>
            <person name="Mears K.S."/>
            <person name="Liu J."/>
            <person name="Kashin D."/>
            <person name="Guo X."/>
            <person name="Mass T."/>
            <person name="Sebe-Pedros A."/>
            <person name="Schwede F."/>
            <person name="Kranzusch P.J."/>
        </authorList>
    </citation>
    <scope>FUNCTION</scope>
    <scope>CATALYTIC ACTIVITY</scope>
</reference>
<comment type="function">
    <text evidence="4">Nucleotidyltransferase that catalyzes the formation of cyclic UMP-AMP (2',3'-cUAMP) from ATP and UTP and plays a key role in innate immunity (PubMed:37379839). Acts as a key sensor of double-stranded DNA (dsDNA), the presence of dsDNA in the cytoplasm being a danger signal that triggers the immune responses (PubMed:37379839). Directly binds dsDNA, activating the nucleotidyltransferase activity, leading to synthesis of 2',3'-cUAMP, a second messenger that binds to and activates Sting, thereby triggering the immune response via activation of the NF-kappa-B transcription factor (PubMed:37379839).</text>
</comment>
<comment type="catalytic activity">
    <reaction evidence="4">
        <text>UTP + ATP = 2',3'-cUAMP + 2 diphosphate</text>
        <dbReference type="Rhea" id="RHEA:78335"/>
        <dbReference type="ChEBI" id="CHEBI:30616"/>
        <dbReference type="ChEBI" id="CHEBI:33019"/>
        <dbReference type="ChEBI" id="CHEBI:46398"/>
        <dbReference type="ChEBI" id="CHEBI:228269"/>
    </reaction>
    <physiologicalReaction direction="left-to-right" evidence="4">
        <dbReference type="Rhea" id="RHEA:78336"/>
    </physiologicalReaction>
</comment>
<comment type="cofactor">
    <cofactor evidence="1">
        <name>Mg(2+)</name>
        <dbReference type="ChEBI" id="CHEBI:18420"/>
    </cofactor>
    <cofactor evidence="1">
        <name>Mn(2+)</name>
        <dbReference type="ChEBI" id="CHEBI:29035"/>
    </cofactor>
</comment>
<comment type="similarity">
    <text evidence="6">Belongs to the mab-21 family.</text>
</comment>